<reference key="1">
    <citation type="journal article" date="2006" name="Nat. Biotechnol.">
        <title>Genome sequence of the ubiquitous hydrocarbon-degrading marine bacterium Alcanivorax borkumensis.</title>
        <authorList>
            <person name="Schneiker S."/>
            <person name="Martins dos Santos V.A.P."/>
            <person name="Bartels D."/>
            <person name="Bekel T."/>
            <person name="Brecht M."/>
            <person name="Buhrmester J."/>
            <person name="Chernikova T.N."/>
            <person name="Denaro R."/>
            <person name="Ferrer M."/>
            <person name="Gertler C."/>
            <person name="Goesmann A."/>
            <person name="Golyshina O.V."/>
            <person name="Kaminski F."/>
            <person name="Khachane A.N."/>
            <person name="Lang S."/>
            <person name="Linke B."/>
            <person name="McHardy A.C."/>
            <person name="Meyer F."/>
            <person name="Nechitaylo T."/>
            <person name="Puehler A."/>
            <person name="Regenhardt D."/>
            <person name="Rupp O."/>
            <person name="Sabirova J.S."/>
            <person name="Selbitschka W."/>
            <person name="Yakimov M.M."/>
            <person name="Timmis K.N."/>
            <person name="Vorhoelter F.-J."/>
            <person name="Weidner S."/>
            <person name="Kaiser O."/>
            <person name="Golyshin P.N."/>
        </authorList>
    </citation>
    <scope>NUCLEOTIDE SEQUENCE [LARGE SCALE GENOMIC DNA]</scope>
    <source>
        <strain>ATCC 700651 / DSM 11573 / NCIMB 13689 / SK2</strain>
    </source>
</reference>
<organism>
    <name type="scientific">Alcanivorax borkumensis (strain ATCC 700651 / DSM 11573 / NCIMB 13689 / SK2)</name>
    <dbReference type="NCBI Taxonomy" id="393595"/>
    <lineage>
        <taxon>Bacteria</taxon>
        <taxon>Pseudomonadati</taxon>
        <taxon>Pseudomonadota</taxon>
        <taxon>Gammaproteobacteria</taxon>
        <taxon>Oceanospirillales</taxon>
        <taxon>Alcanivoracaceae</taxon>
        <taxon>Alcanivorax</taxon>
    </lineage>
</organism>
<dbReference type="EC" id="2.1.2.11" evidence="1"/>
<dbReference type="EMBL" id="AM286690">
    <property type="protein sequence ID" value="CAL15785.1"/>
    <property type="molecule type" value="Genomic_DNA"/>
</dbReference>
<dbReference type="RefSeq" id="WP_011587632.1">
    <property type="nucleotide sequence ID" value="NC_008260.1"/>
</dbReference>
<dbReference type="SMR" id="Q0VSR3"/>
<dbReference type="STRING" id="393595.ABO_0337"/>
<dbReference type="KEGG" id="abo:ABO_0337"/>
<dbReference type="eggNOG" id="COG0413">
    <property type="taxonomic scope" value="Bacteria"/>
</dbReference>
<dbReference type="HOGENOM" id="CLU_036645_1_0_6"/>
<dbReference type="OrthoDB" id="9781789at2"/>
<dbReference type="UniPathway" id="UPA00028">
    <property type="reaction ID" value="UER00003"/>
</dbReference>
<dbReference type="Proteomes" id="UP000008871">
    <property type="component" value="Chromosome"/>
</dbReference>
<dbReference type="GO" id="GO:0005737">
    <property type="term" value="C:cytoplasm"/>
    <property type="evidence" value="ECO:0007669"/>
    <property type="project" value="UniProtKB-SubCell"/>
</dbReference>
<dbReference type="GO" id="GO:0003864">
    <property type="term" value="F:3-methyl-2-oxobutanoate hydroxymethyltransferase activity"/>
    <property type="evidence" value="ECO:0007669"/>
    <property type="project" value="UniProtKB-UniRule"/>
</dbReference>
<dbReference type="GO" id="GO:0000287">
    <property type="term" value="F:magnesium ion binding"/>
    <property type="evidence" value="ECO:0007669"/>
    <property type="project" value="TreeGrafter"/>
</dbReference>
<dbReference type="GO" id="GO:0015940">
    <property type="term" value="P:pantothenate biosynthetic process"/>
    <property type="evidence" value="ECO:0007669"/>
    <property type="project" value="UniProtKB-UniRule"/>
</dbReference>
<dbReference type="CDD" id="cd06557">
    <property type="entry name" value="KPHMT-like"/>
    <property type="match status" value="1"/>
</dbReference>
<dbReference type="FunFam" id="3.20.20.60:FF:000003">
    <property type="entry name" value="3-methyl-2-oxobutanoate hydroxymethyltransferase"/>
    <property type="match status" value="1"/>
</dbReference>
<dbReference type="Gene3D" id="3.20.20.60">
    <property type="entry name" value="Phosphoenolpyruvate-binding domains"/>
    <property type="match status" value="1"/>
</dbReference>
<dbReference type="HAMAP" id="MF_00156">
    <property type="entry name" value="PanB"/>
    <property type="match status" value="1"/>
</dbReference>
<dbReference type="InterPro" id="IPR003700">
    <property type="entry name" value="Pantoate_hydroxy_MeTrfase"/>
</dbReference>
<dbReference type="InterPro" id="IPR015813">
    <property type="entry name" value="Pyrv/PenolPyrv_kinase-like_dom"/>
</dbReference>
<dbReference type="InterPro" id="IPR040442">
    <property type="entry name" value="Pyrv_kinase-like_dom_sf"/>
</dbReference>
<dbReference type="NCBIfam" id="TIGR00222">
    <property type="entry name" value="panB"/>
    <property type="match status" value="1"/>
</dbReference>
<dbReference type="NCBIfam" id="NF001452">
    <property type="entry name" value="PRK00311.1"/>
    <property type="match status" value="1"/>
</dbReference>
<dbReference type="PANTHER" id="PTHR20881">
    <property type="entry name" value="3-METHYL-2-OXOBUTANOATE HYDROXYMETHYLTRANSFERASE"/>
    <property type="match status" value="1"/>
</dbReference>
<dbReference type="PANTHER" id="PTHR20881:SF0">
    <property type="entry name" value="3-METHYL-2-OXOBUTANOATE HYDROXYMETHYLTRANSFERASE"/>
    <property type="match status" value="1"/>
</dbReference>
<dbReference type="Pfam" id="PF02548">
    <property type="entry name" value="Pantoate_transf"/>
    <property type="match status" value="1"/>
</dbReference>
<dbReference type="PIRSF" id="PIRSF000388">
    <property type="entry name" value="Pantoate_hydroxy_MeTrfase"/>
    <property type="match status" value="1"/>
</dbReference>
<dbReference type="SUPFAM" id="SSF51621">
    <property type="entry name" value="Phosphoenolpyruvate/pyruvate domain"/>
    <property type="match status" value="1"/>
</dbReference>
<feature type="chain" id="PRO_0000297211" description="3-methyl-2-oxobutanoate hydroxymethyltransferase">
    <location>
        <begin position="1"/>
        <end position="262"/>
    </location>
</feature>
<feature type="active site" description="Proton acceptor" evidence="1">
    <location>
        <position position="180"/>
    </location>
</feature>
<feature type="binding site" evidence="1">
    <location>
        <begin position="44"/>
        <end position="45"/>
    </location>
    <ligand>
        <name>3-methyl-2-oxobutanoate</name>
        <dbReference type="ChEBI" id="CHEBI:11851"/>
    </ligand>
</feature>
<feature type="binding site" evidence="1">
    <location>
        <position position="44"/>
    </location>
    <ligand>
        <name>Mg(2+)</name>
        <dbReference type="ChEBI" id="CHEBI:18420"/>
    </ligand>
</feature>
<feature type="binding site" evidence="1">
    <location>
        <position position="83"/>
    </location>
    <ligand>
        <name>3-methyl-2-oxobutanoate</name>
        <dbReference type="ChEBI" id="CHEBI:11851"/>
    </ligand>
</feature>
<feature type="binding site" evidence="1">
    <location>
        <position position="83"/>
    </location>
    <ligand>
        <name>Mg(2+)</name>
        <dbReference type="ChEBI" id="CHEBI:18420"/>
    </ligand>
</feature>
<feature type="binding site" evidence="1">
    <location>
        <position position="111"/>
    </location>
    <ligand>
        <name>3-methyl-2-oxobutanoate</name>
        <dbReference type="ChEBI" id="CHEBI:11851"/>
    </ligand>
</feature>
<feature type="binding site" evidence="1">
    <location>
        <position position="113"/>
    </location>
    <ligand>
        <name>Mg(2+)</name>
        <dbReference type="ChEBI" id="CHEBI:18420"/>
    </ligand>
</feature>
<keyword id="KW-0963">Cytoplasm</keyword>
<keyword id="KW-0460">Magnesium</keyword>
<keyword id="KW-0479">Metal-binding</keyword>
<keyword id="KW-0566">Pantothenate biosynthesis</keyword>
<keyword id="KW-1185">Reference proteome</keyword>
<keyword id="KW-0808">Transferase</keyword>
<accession>Q0VSR3</accession>
<evidence type="ECO:0000255" key="1">
    <source>
        <dbReference type="HAMAP-Rule" id="MF_00156"/>
    </source>
</evidence>
<comment type="function">
    <text evidence="1">Catalyzes the reversible reaction in which hydroxymethyl group from 5,10-methylenetetrahydrofolate is transferred onto alpha-ketoisovalerate to form ketopantoate.</text>
</comment>
<comment type="catalytic activity">
    <reaction evidence="1">
        <text>3-methyl-2-oxobutanoate + (6R)-5,10-methylene-5,6,7,8-tetrahydrofolate + H2O = 2-dehydropantoate + (6S)-5,6,7,8-tetrahydrofolate</text>
        <dbReference type="Rhea" id="RHEA:11824"/>
        <dbReference type="ChEBI" id="CHEBI:11561"/>
        <dbReference type="ChEBI" id="CHEBI:11851"/>
        <dbReference type="ChEBI" id="CHEBI:15377"/>
        <dbReference type="ChEBI" id="CHEBI:15636"/>
        <dbReference type="ChEBI" id="CHEBI:57453"/>
        <dbReference type="EC" id="2.1.2.11"/>
    </reaction>
</comment>
<comment type="cofactor">
    <cofactor evidence="1">
        <name>Mg(2+)</name>
        <dbReference type="ChEBI" id="CHEBI:18420"/>
    </cofactor>
    <text evidence="1">Binds 1 Mg(2+) ion per subunit.</text>
</comment>
<comment type="pathway">
    <text evidence="1">Cofactor biosynthesis; (R)-pantothenate biosynthesis; (R)-pantoate from 3-methyl-2-oxobutanoate: step 1/2.</text>
</comment>
<comment type="subunit">
    <text evidence="1">Homodecamer; pentamer of dimers.</text>
</comment>
<comment type="subcellular location">
    <subcellularLocation>
        <location evidence="1">Cytoplasm</location>
    </subcellularLocation>
</comment>
<comment type="similarity">
    <text evidence="1">Belongs to the PanB family.</text>
</comment>
<name>PANB_ALCBS</name>
<gene>
    <name evidence="1" type="primary">panB</name>
    <name type="ordered locus">ABO_0337</name>
</gene>
<sequence length="262" mass="27643">MSITIRTLQKRKQDGGKFSVLTAYDACFSRLISEAGVEAILVGDSLGNVIQGQTSTVPVTLEQMVYHTQCVARGNQGSLIIADIPFMGAATLERTLNAATALMQAGANMVKLEGSAWLAEAIEVLNRNGVPVCAHMGLTPQAVNSLGGYRVQGKDDDGAAELLNAAKILDQAGTALFVLECVPRALSAEITREVAAPVIGIGAAPECDGQVLVMHDMLGISPGKPARFVRNFMAETGDMRAAFKAYDDAVKDGSFPADEHCF</sequence>
<protein>
    <recommendedName>
        <fullName evidence="1">3-methyl-2-oxobutanoate hydroxymethyltransferase</fullName>
        <ecNumber evidence="1">2.1.2.11</ecNumber>
    </recommendedName>
    <alternativeName>
        <fullName evidence="1">Ketopantoate hydroxymethyltransferase</fullName>
        <shortName evidence="1">KPHMT</shortName>
    </alternativeName>
</protein>
<proteinExistence type="inferred from homology"/>